<gene>
    <name evidence="1" type="primary">murQ</name>
    <name type="ordered locus">cce_2266</name>
</gene>
<comment type="function">
    <text evidence="1">Specifically catalyzes the cleavage of the D-lactyl ether substituent of MurNAc 6-phosphate, producing GlcNAc 6-phosphate and D-lactate.</text>
</comment>
<comment type="catalytic activity">
    <reaction evidence="1">
        <text>N-acetyl-D-muramate 6-phosphate + H2O = N-acetyl-D-glucosamine 6-phosphate + (R)-lactate</text>
        <dbReference type="Rhea" id="RHEA:26410"/>
        <dbReference type="ChEBI" id="CHEBI:15377"/>
        <dbReference type="ChEBI" id="CHEBI:16004"/>
        <dbReference type="ChEBI" id="CHEBI:57513"/>
        <dbReference type="ChEBI" id="CHEBI:58722"/>
        <dbReference type="EC" id="4.2.1.126"/>
    </reaction>
</comment>
<comment type="pathway">
    <text evidence="1">Amino-sugar metabolism; N-acetylmuramate degradation.</text>
</comment>
<comment type="subunit">
    <text evidence="1">Homodimer.</text>
</comment>
<comment type="miscellaneous">
    <text evidence="1">A lyase-type mechanism (elimination/hydration) is suggested for the cleavage of the lactyl ether bond of MurNAc 6-phosphate, with the formation of an alpha,beta-unsaturated aldehyde intermediate with (E)-stereochemistry, followed by the syn addition of water to give product.</text>
</comment>
<comment type="similarity">
    <text evidence="1">Belongs to the GCKR-like family. MurNAc-6-P etherase subfamily.</text>
</comment>
<feature type="chain" id="PRO_1000092304" description="N-acetylmuramic acid 6-phosphate etherase">
    <location>
        <begin position="1"/>
        <end position="305"/>
    </location>
</feature>
<feature type="domain" description="SIS" evidence="1">
    <location>
        <begin position="59"/>
        <end position="222"/>
    </location>
</feature>
<feature type="active site" description="Proton donor" evidence="1">
    <location>
        <position position="87"/>
    </location>
</feature>
<feature type="active site" evidence="1">
    <location>
        <position position="118"/>
    </location>
</feature>
<sequence length="305" mass="32423">MENIQERGHLLTEQINPNSQNLDQLSTVELVDLFNTEDAQTLKAIAQARIELAQAIDVTSKALGKGGRLFYVGAGTSGRLGVLDAAECPPTFCTDPDMVQGIIAGGAAALVRSSENLEDRPQDGAEAIAGRKVTEKDVVVGISAGGTTPYVHGALNAAKQRGATTIAMACVPAEQVPIVVDIDIRLLTGPEVLAGSTRLKAGTVTKMALNILSTGVMVKLGKVYGNRMIDVSVTNTKLYDRALRILEELTELSRQEAAELLDRSGKRVKLALLMHWAELDAEVGQLLLDNHHGNLRAALQAGQNS</sequence>
<accession>B1WPP6</accession>
<keyword id="KW-0119">Carbohydrate metabolism</keyword>
<keyword id="KW-0456">Lyase</keyword>
<keyword id="KW-1185">Reference proteome</keyword>
<organism>
    <name type="scientific">Crocosphaera subtropica (strain ATCC 51142 / BH68)</name>
    <name type="common">Cyanothece sp. (strain ATCC 51142)</name>
    <dbReference type="NCBI Taxonomy" id="43989"/>
    <lineage>
        <taxon>Bacteria</taxon>
        <taxon>Bacillati</taxon>
        <taxon>Cyanobacteriota</taxon>
        <taxon>Cyanophyceae</taxon>
        <taxon>Oscillatoriophycideae</taxon>
        <taxon>Chroococcales</taxon>
        <taxon>Aphanothecaceae</taxon>
        <taxon>Crocosphaera</taxon>
        <taxon>Crocosphaera subtropica</taxon>
    </lineage>
</organism>
<proteinExistence type="inferred from homology"/>
<protein>
    <recommendedName>
        <fullName evidence="1">N-acetylmuramic acid 6-phosphate etherase</fullName>
        <shortName evidence="1">MurNAc-6-P etherase</shortName>
        <ecNumber evidence="1">4.2.1.126</ecNumber>
    </recommendedName>
    <alternativeName>
        <fullName evidence="1">N-acetylmuramic acid 6-phosphate hydrolase</fullName>
    </alternativeName>
    <alternativeName>
        <fullName evidence="1">N-acetylmuramic acid 6-phosphate lyase</fullName>
    </alternativeName>
</protein>
<dbReference type="EC" id="4.2.1.126" evidence="1"/>
<dbReference type="EMBL" id="CP000806">
    <property type="protein sequence ID" value="ACB51616.1"/>
    <property type="molecule type" value="Genomic_DNA"/>
</dbReference>
<dbReference type="RefSeq" id="WP_009545031.1">
    <property type="nucleotide sequence ID" value="NC_010546.1"/>
</dbReference>
<dbReference type="SMR" id="B1WPP6"/>
<dbReference type="STRING" id="43989.cce_2266"/>
<dbReference type="KEGG" id="cyt:cce_2266"/>
<dbReference type="eggNOG" id="COG2103">
    <property type="taxonomic scope" value="Bacteria"/>
</dbReference>
<dbReference type="HOGENOM" id="CLU_049049_1_1_3"/>
<dbReference type="OrthoDB" id="9813395at2"/>
<dbReference type="UniPathway" id="UPA00342"/>
<dbReference type="Proteomes" id="UP000001203">
    <property type="component" value="Chromosome circular"/>
</dbReference>
<dbReference type="GO" id="GO:0097367">
    <property type="term" value="F:carbohydrate derivative binding"/>
    <property type="evidence" value="ECO:0007669"/>
    <property type="project" value="InterPro"/>
</dbReference>
<dbReference type="GO" id="GO:0016835">
    <property type="term" value="F:carbon-oxygen lyase activity"/>
    <property type="evidence" value="ECO:0007669"/>
    <property type="project" value="UniProtKB-UniRule"/>
</dbReference>
<dbReference type="GO" id="GO:0016803">
    <property type="term" value="F:ether hydrolase activity"/>
    <property type="evidence" value="ECO:0007669"/>
    <property type="project" value="TreeGrafter"/>
</dbReference>
<dbReference type="GO" id="GO:0046348">
    <property type="term" value="P:amino sugar catabolic process"/>
    <property type="evidence" value="ECO:0007669"/>
    <property type="project" value="InterPro"/>
</dbReference>
<dbReference type="GO" id="GO:0097173">
    <property type="term" value="P:N-acetylmuramic acid catabolic process"/>
    <property type="evidence" value="ECO:0007669"/>
    <property type="project" value="UniProtKB-UniPathway"/>
</dbReference>
<dbReference type="GO" id="GO:0009254">
    <property type="term" value="P:peptidoglycan turnover"/>
    <property type="evidence" value="ECO:0007669"/>
    <property type="project" value="TreeGrafter"/>
</dbReference>
<dbReference type="CDD" id="cd05007">
    <property type="entry name" value="SIS_Etherase"/>
    <property type="match status" value="1"/>
</dbReference>
<dbReference type="FunFam" id="3.40.50.10490:FF:000014">
    <property type="entry name" value="N-acetylmuramic acid 6-phosphate etherase"/>
    <property type="match status" value="1"/>
</dbReference>
<dbReference type="Gene3D" id="1.10.8.1080">
    <property type="match status" value="1"/>
</dbReference>
<dbReference type="Gene3D" id="3.40.50.10490">
    <property type="entry name" value="Glucose-6-phosphate isomerase like protein, domain 1"/>
    <property type="match status" value="1"/>
</dbReference>
<dbReference type="HAMAP" id="MF_00068">
    <property type="entry name" value="MurQ"/>
    <property type="match status" value="1"/>
</dbReference>
<dbReference type="InterPro" id="IPR005488">
    <property type="entry name" value="Etherase_MurQ"/>
</dbReference>
<dbReference type="InterPro" id="IPR005486">
    <property type="entry name" value="Glucokinase_regulatory_CS"/>
</dbReference>
<dbReference type="InterPro" id="IPR040190">
    <property type="entry name" value="MURQ/GCKR"/>
</dbReference>
<dbReference type="InterPro" id="IPR001347">
    <property type="entry name" value="SIS_dom"/>
</dbReference>
<dbReference type="InterPro" id="IPR046348">
    <property type="entry name" value="SIS_dom_sf"/>
</dbReference>
<dbReference type="NCBIfam" id="TIGR00274">
    <property type="entry name" value="N-acetylmuramic acid 6-phosphate etherase"/>
    <property type="match status" value="1"/>
</dbReference>
<dbReference type="NCBIfam" id="NF003915">
    <property type="entry name" value="PRK05441.1"/>
    <property type="match status" value="1"/>
</dbReference>
<dbReference type="NCBIfam" id="NF009222">
    <property type="entry name" value="PRK12570.1"/>
    <property type="match status" value="1"/>
</dbReference>
<dbReference type="PANTHER" id="PTHR10088">
    <property type="entry name" value="GLUCOKINASE REGULATORY PROTEIN"/>
    <property type="match status" value="1"/>
</dbReference>
<dbReference type="PANTHER" id="PTHR10088:SF4">
    <property type="entry name" value="GLUCOKINASE REGULATORY PROTEIN"/>
    <property type="match status" value="1"/>
</dbReference>
<dbReference type="Pfam" id="PF20741">
    <property type="entry name" value="GKRP-like_C"/>
    <property type="match status" value="1"/>
</dbReference>
<dbReference type="Pfam" id="PF22645">
    <property type="entry name" value="GKRP_SIS_N"/>
    <property type="match status" value="1"/>
</dbReference>
<dbReference type="SUPFAM" id="SSF53697">
    <property type="entry name" value="SIS domain"/>
    <property type="match status" value="1"/>
</dbReference>
<dbReference type="PROSITE" id="PS01272">
    <property type="entry name" value="GCKR"/>
    <property type="match status" value="1"/>
</dbReference>
<dbReference type="PROSITE" id="PS51464">
    <property type="entry name" value="SIS"/>
    <property type="match status" value="1"/>
</dbReference>
<name>MURQ_CROS5</name>
<reference key="1">
    <citation type="journal article" date="2008" name="Proc. Natl. Acad. Sci. U.S.A.">
        <title>The genome of Cyanothece 51142, a unicellular diazotrophic cyanobacterium important in the marine nitrogen cycle.</title>
        <authorList>
            <person name="Welsh E.A."/>
            <person name="Liberton M."/>
            <person name="Stoeckel J."/>
            <person name="Loh T."/>
            <person name="Elvitigala T."/>
            <person name="Wang C."/>
            <person name="Wollam A."/>
            <person name="Fulton R.S."/>
            <person name="Clifton S.W."/>
            <person name="Jacobs J.M."/>
            <person name="Aurora R."/>
            <person name="Ghosh B.K."/>
            <person name="Sherman L.A."/>
            <person name="Smith R.D."/>
            <person name="Wilson R.K."/>
            <person name="Pakrasi H.B."/>
        </authorList>
    </citation>
    <scope>NUCLEOTIDE SEQUENCE [LARGE SCALE GENOMIC DNA]</scope>
    <source>
        <strain>ATCC 51142 / BH68</strain>
    </source>
</reference>
<evidence type="ECO:0000255" key="1">
    <source>
        <dbReference type="HAMAP-Rule" id="MF_00068"/>
    </source>
</evidence>